<name>AAMP_HUMAN</name>
<organism>
    <name type="scientific">Homo sapiens</name>
    <name type="common">Human</name>
    <dbReference type="NCBI Taxonomy" id="9606"/>
    <lineage>
        <taxon>Eukaryota</taxon>
        <taxon>Metazoa</taxon>
        <taxon>Chordata</taxon>
        <taxon>Craniata</taxon>
        <taxon>Vertebrata</taxon>
        <taxon>Euteleostomi</taxon>
        <taxon>Mammalia</taxon>
        <taxon>Eutheria</taxon>
        <taxon>Euarchontoglires</taxon>
        <taxon>Primates</taxon>
        <taxon>Haplorrhini</taxon>
        <taxon>Catarrhini</taxon>
        <taxon>Hominidae</taxon>
        <taxon>Homo</taxon>
    </lineage>
</organism>
<reference key="1">
    <citation type="journal article" date="1995" name="Cancer Res.">
        <title>Identification of a new immunoglobulin superfamily protein expressed in blood vessels with a heparin-binding consensus sequence.</title>
        <authorList>
            <person name="Beckner M.E."/>
            <person name="Krutzsch H.C."/>
            <person name="Stracke M.L."/>
            <person name="Williams S.T."/>
            <person name="Gallardo J.A."/>
            <person name="Liotta L.A."/>
        </authorList>
    </citation>
    <scope>NUCLEOTIDE SEQUENCE [MRNA]</scope>
    <scope>PARTIAL PROTEIN SEQUENCE</scope>
    <scope>TISSUE SPECIFICITY</scope>
    <source>
        <tissue>Brain</tissue>
    </source>
</reference>
<reference key="2">
    <citation type="submission" date="2004-06" db="EMBL/GenBank/DDBJ databases">
        <title>Cloning of human full open reading frames in Gateway(TM) system entry vector (pDONR201).</title>
        <authorList>
            <person name="Ebert L."/>
            <person name="Schick M."/>
            <person name="Neubert P."/>
            <person name="Schatten R."/>
            <person name="Henze S."/>
            <person name="Korn B."/>
        </authorList>
    </citation>
    <scope>NUCLEOTIDE SEQUENCE [LARGE SCALE MRNA]</scope>
</reference>
<reference key="3">
    <citation type="journal article" date="2004" name="Genome Res.">
        <title>The status, quality, and expansion of the NIH full-length cDNA project: the Mammalian Gene Collection (MGC).</title>
        <authorList>
            <consortium name="The MGC Project Team"/>
        </authorList>
    </citation>
    <scope>NUCLEOTIDE SEQUENCE [LARGE SCALE MRNA]</scope>
    <source>
        <tissue>Ovary</tissue>
        <tissue>Skin</tissue>
    </source>
</reference>
<reference key="4">
    <citation type="journal article" date="1999" name="Microvasc. Res.">
        <title>Angio-associated migratory cell protein is expressed as an extracellular protein by blood-vessel-associated mesenchymal cells.</title>
        <authorList>
            <person name="Beckner M.E."/>
            <person name="Peterson V.A."/>
            <person name="Moul D.E."/>
        </authorList>
    </citation>
    <scope>FUNCTION</scope>
    <scope>SUBCELLULAR LOCATION</scope>
    <scope>TISSUE SPECIFICITY</scope>
</reference>
<reference key="5">
    <citation type="journal article" date="2008" name="J. Am. Coll. Cardiol.">
        <title>Blockade of angio-associated migratory cell protein inhibits smooth muscle cell migration and neointima formation in accelerated atherosclerosis.</title>
        <authorList>
            <person name="Vogt F."/>
            <person name="Zernecke A."/>
            <person name="Beckner M."/>
            <person name="Krott N."/>
            <person name="Bosserhoff A.-K."/>
            <person name="Hoffmann R."/>
            <person name="Zandvoort M.A.M.J."/>
            <person name="Jahnke T."/>
            <person name="Kelm M."/>
            <person name="Weber C."/>
            <person name="Blindt R."/>
        </authorList>
    </citation>
    <scope>FUNCTION</scope>
    <scope>SUBCELLULAR LOCATION</scope>
</reference>
<reference key="6">
    <citation type="journal article" date="2011" name="BMC Syst. Biol.">
        <title>Initial characterization of the human central proteome.</title>
        <authorList>
            <person name="Burkard T.R."/>
            <person name="Planyavsky M."/>
            <person name="Kaupe I."/>
            <person name="Breitwieser F.P."/>
            <person name="Buerckstuemmer T."/>
            <person name="Bennett K.L."/>
            <person name="Superti-Furga G."/>
            <person name="Colinge J."/>
        </authorList>
    </citation>
    <scope>IDENTIFICATION BY MASS SPECTROMETRY [LARGE SCALE ANALYSIS]</scope>
</reference>
<reference key="7">
    <citation type="journal article" date="2014" name="J. Proteomics">
        <title>An enzyme assisted RP-RPLC approach for in-depth analysis of human liver phosphoproteome.</title>
        <authorList>
            <person name="Bian Y."/>
            <person name="Song C."/>
            <person name="Cheng K."/>
            <person name="Dong M."/>
            <person name="Wang F."/>
            <person name="Huang J."/>
            <person name="Sun D."/>
            <person name="Wang L."/>
            <person name="Ye M."/>
            <person name="Zou H."/>
        </authorList>
    </citation>
    <scope>PHOSPHORYLATION [LARGE SCALE ANALYSIS] AT SER-20</scope>
    <scope>IDENTIFICATION BY MASS SPECTROMETRY [LARGE SCALE ANALYSIS]</scope>
    <source>
        <tissue>Liver</tissue>
    </source>
</reference>
<comment type="function">
    <text evidence="2 3">Plays a role in angiogenesis and cell migration. In smooth muscle cell migration, may act through the RhoA pathway.</text>
</comment>
<comment type="interaction">
    <interactant intactId="EBI-727274">
        <id>Q13685</id>
    </interactant>
    <interactant intactId="EBI-8637627">
        <id>Q8WTP8</id>
        <label>AEN</label>
    </interactant>
    <organismsDiffer>false</organismsDiffer>
    <experiments>2</experiments>
</comment>
<comment type="interaction">
    <interactant intactId="EBI-727274">
        <id>Q13685</id>
    </interactant>
    <interactant intactId="EBI-12119298">
        <id>Q8WTP8-2</id>
        <label>AEN</label>
    </interactant>
    <organismsDiffer>false</organismsDiffer>
    <experiments>4</experiments>
</comment>
<comment type="subcellular location">
    <subcellularLocation>
        <location>Cell membrane</location>
    </subcellularLocation>
    <subcellularLocation>
        <location>Cytoplasm</location>
    </subcellularLocation>
</comment>
<comment type="tissue specificity">
    <text evidence="2 4">Expressed in metastatic melanoma, liver, skin, kidney, heart, lung, lymph node, skeletal muscle and brain, and also in A2058 melanoma cells and activated T-cells (at protein level). Expressed in blood vessels. Strongly expressed in endothelial cells, cytotrophoblasts, and poorly differentiated. colon adenocarcinoma cells found in lymphatics.</text>
</comment>
<comment type="sequence caution" evidence="5">
    <conflict type="erroneous initiation">
        <sequence resource="EMBL-CDS" id="AAA68889"/>
    </conflict>
</comment>
<comment type="sequence caution" evidence="5">
    <conflict type="erroneous initiation">
        <sequence resource="EMBL-CDS" id="CAG33036"/>
    </conflict>
</comment>
<comment type="online information" name="Atlas of Genetics and Cytogenetics in Oncology and Haematology">
    <link uri="https://atlasgeneticsoncology.org/gene/533/AAMP"/>
</comment>
<proteinExistence type="evidence at protein level"/>
<feature type="chain" id="PRO_0000050832" description="Angio-associated migratory cell protein">
    <location>
        <begin position="1"/>
        <end position="434"/>
    </location>
</feature>
<feature type="repeat" description="WD 1">
    <location>
        <begin position="89"/>
        <end position="129"/>
    </location>
</feature>
<feature type="repeat" description="WD 2">
    <location>
        <begin position="132"/>
        <end position="171"/>
    </location>
</feature>
<feature type="repeat" description="WD 3">
    <location>
        <begin position="173"/>
        <end position="212"/>
    </location>
</feature>
<feature type="repeat" description="WD 4">
    <location>
        <begin position="214"/>
        <end position="254"/>
    </location>
</feature>
<feature type="repeat" description="WD 5">
    <location>
        <begin position="258"/>
        <end position="299"/>
    </location>
</feature>
<feature type="repeat" description="WD 6">
    <location>
        <begin position="315"/>
        <end position="354"/>
    </location>
</feature>
<feature type="repeat" description="WD 7">
    <location>
        <begin position="356"/>
        <end position="395"/>
    </location>
</feature>
<feature type="repeat" description="WD 8">
    <location>
        <begin position="398"/>
        <end position="433"/>
    </location>
</feature>
<feature type="region of interest" description="Disordered" evidence="1">
    <location>
        <begin position="1"/>
        <end position="63"/>
    </location>
</feature>
<feature type="compositionally biased region" description="Acidic residues" evidence="1">
    <location>
        <begin position="39"/>
        <end position="62"/>
    </location>
</feature>
<feature type="modified residue" description="Phosphoserine" evidence="6">
    <location>
        <position position="20"/>
    </location>
</feature>
<feature type="sequence variant" id="VAR_037061" description="In dbSNP:rs2305835.">
    <original>I</original>
    <variation>V</variation>
    <location>
        <position position="250"/>
    </location>
</feature>
<evidence type="ECO:0000256" key="1">
    <source>
        <dbReference type="SAM" id="MobiDB-lite"/>
    </source>
</evidence>
<evidence type="ECO:0000269" key="2">
    <source>
    </source>
</evidence>
<evidence type="ECO:0000269" key="3">
    <source>
    </source>
</evidence>
<evidence type="ECO:0000269" key="4">
    <source>
    </source>
</evidence>
<evidence type="ECO:0000305" key="5"/>
<evidence type="ECO:0007744" key="6">
    <source>
    </source>
</evidence>
<dbReference type="EMBL" id="M95627">
    <property type="protein sequence ID" value="AAA68889.1"/>
    <property type="status" value="ALT_INIT"/>
    <property type="molecule type" value="mRNA"/>
</dbReference>
<dbReference type="EMBL" id="CR456755">
    <property type="protein sequence ID" value="CAG33036.1"/>
    <property type="status" value="ALT_INIT"/>
    <property type="molecule type" value="mRNA"/>
</dbReference>
<dbReference type="EMBL" id="BC008809">
    <property type="protein sequence ID" value="AAH08809.2"/>
    <property type="molecule type" value="mRNA"/>
</dbReference>
<dbReference type="EMBL" id="BC020244">
    <property type="protein sequence ID" value="AAH20244.1"/>
    <property type="molecule type" value="mRNA"/>
</dbReference>
<dbReference type="EMBL" id="BC039866">
    <property type="protein sequence ID" value="AAH39866.2"/>
    <property type="molecule type" value="mRNA"/>
</dbReference>
<dbReference type="CCDS" id="CCDS33378.1"/>
<dbReference type="PIR" id="I39383">
    <property type="entry name" value="I39383"/>
</dbReference>
<dbReference type="RefSeq" id="NP_001078.2">
    <property type="nucleotide sequence ID" value="NM_001087.5"/>
</dbReference>
<dbReference type="SMR" id="Q13685"/>
<dbReference type="BioGRID" id="106532">
    <property type="interactions" value="77"/>
</dbReference>
<dbReference type="FunCoup" id="Q13685">
    <property type="interactions" value="1643"/>
</dbReference>
<dbReference type="IntAct" id="Q13685">
    <property type="interactions" value="30"/>
</dbReference>
<dbReference type="MINT" id="Q13685"/>
<dbReference type="STRING" id="9606.ENSP00000403343"/>
<dbReference type="GlyGen" id="Q13685">
    <property type="glycosylation" value="1 site, 1 O-linked glycan (1 site)"/>
</dbReference>
<dbReference type="iPTMnet" id="Q13685"/>
<dbReference type="PhosphoSitePlus" id="Q13685"/>
<dbReference type="BioMuta" id="AAMP"/>
<dbReference type="DMDM" id="62906874"/>
<dbReference type="jPOST" id="Q13685"/>
<dbReference type="MassIVE" id="Q13685"/>
<dbReference type="PaxDb" id="9606-ENSP00000248450"/>
<dbReference type="PeptideAtlas" id="Q13685"/>
<dbReference type="ProteomicsDB" id="59660"/>
<dbReference type="Pumba" id="Q13685"/>
<dbReference type="Antibodypedia" id="34259">
    <property type="antibodies" value="170 antibodies from 29 providers"/>
</dbReference>
<dbReference type="DNASU" id="14"/>
<dbReference type="Ensembl" id="ENST00000248450.9">
    <property type="protein sequence ID" value="ENSP00000248450.4"/>
    <property type="gene ID" value="ENSG00000127837.10"/>
</dbReference>
<dbReference type="GeneID" id="14"/>
<dbReference type="KEGG" id="hsa:14"/>
<dbReference type="MANE-Select" id="ENST00000248450.9">
    <property type="protein sequence ID" value="ENSP00000248450.4"/>
    <property type="RefSeq nucleotide sequence ID" value="NM_001087.5"/>
    <property type="RefSeq protein sequence ID" value="NP_001078.2"/>
</dbReference>
<dbReference type="UCSC" id="uc002vhk.4">
    <property type="organism name" value="human"/>
</dbReference>
<dbReference type="AGR" id="HGNC:18"/>
<dbReference type="CTD" id="14"/>
<dbReference type="DisGeNET" id="14"/>
<dbReference type="GeneCards" id="AAMP"/>
<dbReference type="HGNC" id="HGNC:18">
    <property type="gene designation" value="AAMP"/>
</dbReference>
<dbReference type="HPA" id="ENSG00000127837">
    <property type="expression patterns" value="Low tissue specificity"/>
</dbReference>
<dbReference type="MalaCards" id="AAMP"/>
<dbReference type="MIM" id="603488">
    <property type="type" value="gene"/>
</dbReference>
<dbReference type="neXtProt" id="NX_Q13685"/>
<dbReference type="OpenTargets" id="ENSG00000127837"/>
<dbReference type="PharmGKB" id="PA24365"/>
<dbReference type="VEuPathDB" id="HostDB:ENSG00000127837"/>
<dbReference type="eggNOG" id="KOG0296">
    <property type="taxonomic scope" value="Eukaryota"/>
</dbReference>
<dbReference type="GeneTree" id="ENSGT00940000153648"/>
<dbReference type="HOGENOM" id="CLU_000288_57_9_1"/>
<dbReference type="InParanoid" id="Q13685"/>
<dbReference type="OMA" id="GPDEVMW"/>
<dbReference type="OrthoDB" id="10261640at2759"/>
<dbReference type="PAN-GO" id="Q13685">
    <property type="GO annotations" value="1 GO annotation based on evolutionary models"/>
</dbReference>
<dbReference type="PhylomeDB" id="Q13685"/>
<dbReference type="TreeFam" id="TF314543"/>
<dbReference type="PathwayCommons" id="Q13685"/>
<dbReference type="Reactome" id="R-HSA-168638">
    <property type="pathway name" value="NOD1/2 Signaling Pathway"/>
</dbReference>
<dbReference type="Reactome" id="R-HSA-177929">
    <property type="pathway name" value="Signaling by EGFR"/>
</dbReference>
<dbReference type="Reactome" id="R-HSA-194138">
    <property type="pathway name" value="Signaling by VEGF"/>
</dbReference>
<dbReference type="Reactome" id="R-HSA-428930">
    <property type="pathway name" value="Thromboxane signalling through TP receptor"/>
</dbReference>
<dbReference type="SignaLink" id="Q13685"/>
<dbReference type="BioGRID-ORCS" id="14">
    <property type="hits" value="753 hits in 1174 CRISPR screens"/>
</dbReference>
<dbReference type="ChiTaRS" id="AAMP">
    <property type="organism name" value="human"/>
</dbReference>
<dbReference type="GeneWiki" id="AAMP_(gene)"/>
<dbReference type="GenomeRNAi" id="14"/>
<dbReference type="Pharos" id="Q13685">
    <property type="development level" value="Tbio"/>
</dbReference>
<dbReference type="PRO" id="PR:Q13685"/>
<dbReference type="Proteomes" id="UP000005640">
    <property type="component" value="Chromosome 2"/>
</dbReference>
<dbReference type="RNAct" id="Q13685">
    <property type="molecule type" value="protein"/>
</dbReference>
<dbReference type="Bgee" id="ENSG00000127837">
    <property type="expression patterns" value="Expressed in body of stomach and 200 other cell types or tissues"/>
</dbReference>
<dbReference type="ExpressionAtlas" id="Q13685">
    <property type="expression patterns" value="baseline and differential"/>
</dbReference>
<dbReference type="GO" id="GO:0009986">
    <property type="term" value="C:cell surface"/>
    <property type="evidence" value="ECO:0000314"/>
    <property type="project" value="UniProtKB"/>
</dbReference>
<dbReference type="GO" id="GO:0005829">
    <property type="term" value="C:cytosol"/>
    <property type="evidence" value="ECO:0000318"/>
    <property type="project" value="GO_Central"/>
</dbReference>
<dbReference type="GO" id="GO:0045171">
    <property type="term" value="C:intercellular bridge"/>
    <property type="evidence" value="ECO:0000314"/>
    <property type="project" value="HPA"/>
</dbReference>
<dbReference type="GO" id="GO:0015630">
    <property type="term" value="C:microtubule cytoskeleton"/>
    <property type="evidence" value="ECO:0000314"/>
    <property type="project" value="HPA"/>
</dbReference>
<dbReference type="GO" id="GO:0005886">
    <property type="term" value="C:plasma membrane"/>
    <property type="evidence" value="ECO:0000314"/>
    <property type="project" value="HPA"/>
</dbReference>
<dbReference type="GO" id="GO:0008201">
    <property type="term" value="F:heparin binding"/>
    <property type="evidence" value="ECO:0000314"/>
    <property type="project" value="GO_Central"/>
</dbReference>
<dbReference type="GO" id="GO:0001525">
    <property type="term" value="P:angiogenesis"/>
    <property type="evidence" value="ECO:0000303"/>
    <property type="project" value="UniProtKB"/>
</dbReference>
<dbReference type="GO" id="GO:0030154">
    <property type="term" value="P:cell differentiation"/>
    <property type="evidence" value="ECO:0007669"/>
    <property type="project" value="UniProtKB-KW"/>
</dbReference>
<dbReference type="GO" id="GO:0010595">
    <property type="term" value="P:positive regulation of endothelial cell migration"/>
    <property type="evidence" value="ECO:0000250"/>
    <property type="project" value="UniProtKB"/>
</dbReference>
<dbReference type="GO" id="GO:0014909">
    <property type="term" value="P:smooth muscle cell migration"/>
    <property type="evidence" value="ECO:0000270"/>
    <property type="project" value="UniProtKB"/>
</dbReference>
<dbReference type="CDD" id="cd00200">
    <property type="entry name" value="WD40"/>
    <property type="match status" value="1"/>
</dbReference>
<dbReference type="FunFam" id="2.130.10.10:FF:000074">
    <property type="entry name" value="Angio-associated migratory cell protein-like protein"/>
    <property type="match status" value="1"/>
</dbReference>
<dbReference type="Gene3D" id="2.130.10.10">
    <property type="entry name" value="YVTN repeat-like/Quinoprotein amine dehydrogenase"/>
    <property type="match status" value="1"/>
</dbReference>
<dbReference type="InterPro" id="IPR015943">
    <property type="entry name" value="WD40/YVTN_repeat-like_dom_sf"/>
</dbReference>
<dbReference type="InterPro" id="IPR019775">
    <property type="entry name" value="WD40_repeat_CS"/>
</dbReference>
<dbReference type="InterPro" id="IPR036322">
    <property type="entry name" value="WD40_repeat_dom_sf"/>
</dbReference>
<dbReference type="InterPro" id="IPR001680">
    <property type="entry name" value="WD40_rpt"/>
</dbReference>
<dbReference type="InterPro" id="IPR051179">
    <property type="entry name" value="WD_repeat_multifunction"/>
</dbReference>
<dbReference type="PANTHER" id="PTHR19857:SF8">
    <property type="entry name" value="ANGIO-ASSOCIATED MIGRATORY CELL PROTEIN"/>
    <property type="match status" value="1"/>
</dbReference>
<dbReference type="PANTHER" id="PTHR19857">
    <property type="entry name" value="MITOCHONDRIAL DIVISION PROTEIN 1-RELATED"/>
    <property type="match status" value="1"/>
</dbReference>
<dbReference type="Pfam" id="PF00400">
    <property type="entry name" value="WD40"/>
    <property type="match status" value="6"/>
</dbReference>
<dbReference type="SMART" id="SM00320">
    <property type="entry name" value="WD40"/>
    <property type="match status" value="8"/>
</dbReference>
<dbReference type="SUPFAM" id="SSF50978">
    <property type="entry name" value="WD40 repeat-like"/>
    <property type="match status" value="1"/>
</dbReference>
<dbReference type="PROSITE" id="PS00678">
    <property type="entry name" value="WD_REPEATS_1"/>
    <property type="match status" value="1"/>
</dbReference>
<dbReference type="PROSITE" id="PS50082">
    <property type="entry name" value="WD_REPEATS_2"/>
    <property type="match status" value="6"/>
</dbReference>
<dbReference type="PROSITE" id="PS50294">
    <property type="entry name" value="WD_REPEATS_REGION"/>
    <property type="match status" value="1"/>
</dbReference>
<accession>Q13685</accession>
<accession>Q8WUJ9</accession>
<accession>Q96H92</accession>
<gene>
    <name type="primary">AAMP</name>
</gene>
<keyword id="KW-0037">Angiogenesis</keyword>
<keyword id="KW-1003">Cell membrane</keyword>
<keyword id="KW-0963">Cytoplasm</keyword>
<keyword id="KW-0217">Developmental protein</keyword>
<keyword id="KW-0221">Differentiation</keyword>
<keyword id="KW-0903">Direct protein sequencing</keyword>
<keyword id="KW-0472">Membrane</keyword>
<keyword id="KW-0597">Phosphoprotein</keyword>
<keyword id="KW-1267">Proteomics identification</keyword>
<keyword id="KW-1185">Reference proteome</keyword>
<keyword id="KW-0677">Repeat</keyword>
<keyword id="KW-0853">WD repeat</keyword>
<sequence>MESESESGAAADTPPLETLSFHGDEEIIEVVELDPGPPDPDDLAQEMEDVDFEEEEEEEGNEEGWVLEPQEGVVGSMEGPDDSEVTFALHSASVFCVSLDPKTNTLAVTGGEDDKAFVWRLSDGELLFECAGHKDSVTCAGFSHDSTLVATGDMSGLLKVWQVDTKEEVWSFEAGDLEWMEWHPRAPVLLAGTADGNTWMWKVPNGDCKTFQGPNCPATCGRVLPDGKRAVVGYEDGTIRIWDLKQGSPIHVLKGTEGHQGPLTCVAANQDGSLILTGSVDCQAKLVSATTGKVVGVFRPETVASQPSLGEGEESESNSVESLGFCSVMPLAAVGYLDGTLAIYDLATQTLRHQCQHQSGIVQLLWEAGTAVVYTCSLDGIVRLWDARTGRLLTDYRGHTAEILDFALSKDASLVVTTSGDHKAKVFCVQRPDR</sequence>
<protein>
    <recommendedName>
        <fullName>Angio-associated migratory cell protein</fullName>
    </recommendedName>
</protein>